<feature type="chain" id="PRO_0000146072" description="Phosphoglycerate kinase">
    <location>
        <begin position="1"/>
        <end position="415"/>
    </location>
</feature>
<feature type="binding site" evidence="1">
    <location>
        <begin position="27"/>
        <end position="29"/>
    </location>
    <ligand>
        <name>substrate</name>
    </ligand>
</feature>
<feature type="binding site" evidence="1">
    <location>
        <position position="44"/>
    </location>
    <ligand>
        <name>substrate</name>
    </ligand>
</feature>
<feature type="binding site" evidence="1">
    <location>
        <begin position="67"/>
        <end position="70"/>
    </location>
    <ligand>
        <name>substrate</name>
    </ligand>
</feature>
<feature type="binding site" evidence="1">
    <location>
        <position position="124"/>
    </location>
    <ligand>
        <name>substrate</name>
    </ligand>
</feature>
<feature type="binding site" evidence="1">
    <location>
        <position position="164"/>
    </location>
    <ligand>
        <name>substrate</name>
    </ligand>
</feature>
<feature type="binding site" evidence="1">
    <location>
        <position position="336"/>
    </location>
    <ligand>
        <name>ATP</name>
        <dbReference type="ChEBI" id="CHEBI:30616"/>
    </ligand>
</feature>
<feature type="binding site" evidence="1">
    <location>
        <begin position="362"/>
        <end position="365"/>
    </location>
    <ligand>
        <name>ATP</name>
        <dbReference type="ChEBI" id="CHEBI:30616"/>
    </ligand>
</feature>
<dbReference type="EC" id="2.7.2.3" evidence="1"/>
<dbReference type="EMBL" id="BA000023">
    <property type="protein sequence ID" value="BAB66419.1"/>
    <property type="molecule type" value="Genomic_DNA"/>
</dbReference>
<dbReference type="RefSeq" id="WP_010979397.1">
    <property type="nucleotide sequence ID" value="NC_003106.2"/>
</dbReference>
<dbReference type="SMR" id="Q971K1"/>
<dbReference type="STRING" id="273063.STK_13570"/>
<dbReference type="KEGG" id="sto:STK_13570"/>
<dbReference type="PATRIC" id="fig|273063.9.peg.1551"/>
<dbReference type="eggNOG" id="arCOG00496">
    <property type="taxonomic scope" value="Archaea"/>
</dbReference>
<dbReference type="OrthoDB" id="6575at2157"/>
<dbReference type="UniPathway" id="UPA00109">
    <property type="reaction ID" value="UER00185"/>
</dbReference>
<dbReference type="Proteomes" id="UP000001015">
    <property type="component" value="Chromosome"/>
</dbReference>
<dbReference type="GO" id="GO:0005829">
    <property type="term" value="C:cytosol"/>
    <property type="evidence" value="ECO:0007669"/>
    <property type="project" value="TreeGrafter"/>
</dbReference>
<dbReference type="GO" id="GO:0043531">
    <property type="term" value="F:ADP binding"/>
    <property type="evidence" value="ECO:0007669"/>
    <property type="project" value="TreeGrafter"/>
</dbReference>
<dbReference type="GO" id="GO:0005524">
    <property type="term" value="F:ATP binding"/>
    <property type="evidence" value="ECO:0007669"/>
    <property type="project" value="UniProtKB-KW"/>
</dbReference>
<dbReference type="GO" id="GO:0004618">
    <property type="term" value="F:phosphoglycerate kinase activity"/>
    <property type="evidence" value="ECO:0007669"/>
    <property type="project" value="UniProtKB-UniRule"/>
</dbReference>
<dbReference type="GO" id="GO:0006094">
    <property type="term" value="P:gluconeogenesis"/>
    <property type="evidence" value="ECO:0007669"/>
    <property type="project" value="TreeGrafter"/>
</dbReference>
<dbReference type="GO" id="GO:0006096">
    <property type="term" value="P:glycolytic process"/>
    <property type="evidence" value="ECO:0007669"/>
    <property type="project" value="UniProtKB-UniRule"/>
</dbReference>
<dbReference type="FunFam" id="3.40.50.1260:FF:000006">
    <property type="entry name" value="Phosphoglycerate kinase"/>
    <property type="match status" value="1"/>
</dbReference>
<dbReference type="FunFam" id="3.40.50.1260:FF:000012">
    <property type="entry name" value="Phosphoglycerate kinase"/>
    <property type="match status" value="1"/>
</dbReference>
<dbReference type="Gene3D" id="3.40.50.1260">
    <property type="entry name" value="Phosphoglycerate kinase, N-terminal domain"/>
    <property type="match status" value="2"/>
</dbReference>
<dbReference type="HAMAP" id="MF_00145">
    <property type="entry name" value="Phosphoglyc_kinase"/>
    <property type="match status" value="1"/>
</dbReference>
<dbReference type="InterPro" id="IPR001576">
    <property type="entry name" value="Phosphoglycerate_kinase"/>
</dbReference>
<dbReference type="InterPro" id="IPR015911">
    <property type="entry name" value="Phosphoglycerate_kinase_CS"/>
</dbReference>
<dbReference type="InterPro" id="IPR015824">
    <property type="entry name" value="Phosphoglycerate_kinase_N"/>
</dbReference>
<dbReference type="InterPro" id="IPR036043">
    <property type="entry name" value="Phosphoglycerate_kinase_sf"/>
</dbReference>
<dbReference type="PANTHER" id="PTHR11406">
    <property type="entry name" value="PHOSPHOGLYCERATE KINASE"/>
    <property type="match status" value="1"/>
</dbReference>
<dbReference type="PANTHER" id="PTHR11406:SF23">
    <property type="entry name" value="PHOSPHOGLYCERATE KINASE 1, CHLOROPLASTIC-RELATED"/>
    <property type="match status" value="1"/>
</dbReference>
<dbReference type="Pfam" id="PF00162">
    <property type="entry name" value="PGK"/>
    <property type="match status" value="1"/>
</dbReference>
<dbReference type="PIRSF" id="PIRSF000724">
    <property type="entry name" value="Pgk"/>
    <property type="match status" value="1"/>
</dbReference>
<dbReference type="PRINTS" id="PR00477">
    <property type="entry name" value="PHGLYCKINASE"/>
</dbReference>
<dbReference type="SUPFAM" id="SSF53748">
    <property type="entry name" value="Phosphoglycerate kinase"/>
    <property type="match status" value="1"/>
</dbReference>
<dbReference type="PROSITE" id="PS00111">
    <property type="entry name" value="PGLYCERATE_KINASE"/>
    <property type="match status" value="1"/>
</dbReference>
<protein>
    <recommendedName>
        <fullName evidence="1">Phosphoglycerate kinase</fullName>
        <ecNumber evidence="1">2.7.2.3</ecNumber>
    </recommendedName>
</protein>
<keyword id="KW-0067">ATP-binding</keyword>
<keyword id="KW-0963">Cytoplasm</keyword>
<keyword id="KW-0324">Glycolysis</keyword>
<keyword id="KW-0418">Kinase</keyword>
<keyword id="KW-0547">Nucleotide-binding</keyword>
<keyword id="KW-1185">Reference proteome</keyword>
<keyword id="KW-0808">Transferase</keyword>
<sequence>MIKVADLNIPVIEDFDINGRKVLLRIDINSPVDRKTGKLLDDSRIKAHAETIRELLDKQNSVVIISHQGRPGDDDFISLEEHSKILSKYVGREIEFVDDVIGPYAREKISKLGKGEAILLENVRIVSEELIEAPPQQQSKTFLVRKLAPLVDFYINDAFATAHRSQPSLVGFPLVKPSAAGRIMEKEVSALSKIFNKEDSPKIFVLGGSKVSDTLKIIEHLAKNRVADRILTGGLVAELFAVAKGINLGKPNMQVLENKGLLSLIPRARKILLSGAPIEIPVDFTVEKPSGELSNDPENNVSGIIKDIGNTTIEIYSSFIKEGKVITLRGPMGVIEDERFRIGTKSLLKASIESPGYVIIGGGHMISMLDKDVEINPNKIHVSTGGGALLLFLAGDKLPALEALHMSWVMQSGKS</sequence>
<proteinExistence type="inferred from homology"/>
<comment type="catalytic activity">
    <reaction evidence="1">
        <text>(2R)-3-phosphoglycerate + ATP = (2R)-3-phospho-glyceroyl phosphate + ADP</text>
        <dbReference type="Rhea" id="RHEA:14801"/>
        <dbReference type="ChEBI" id="CHEBI:30616"/>
        <dbReference type="ChEBI" id="CHEBI:57604"/>
        <dbReference type="ChEBI" id="CHEBI:58272"/>
        <dbReference type="ChEBI" id="CHEBI:456216"/>
        <dbReference type="EC" id="2.7.2.3"/>
    </reaction>
</comment>
<comment type="pathway">
    <text evidence="1">Carbohydrate degradation; glycolysis; pyruvate from D-glyceraldehyde 3-phosphate: step 2/5.</text>
</comment>
<comment type="subunit">
    <text evidence="1">Monomer.</text>
</comment>
<comment type="subcellular location">
    <subcellularLocation>
        <location evidence="1">Cytoplasm</location>
    </subcellularLocation>
</comment>
<comment type="similarity">
    <text evidence="1">Belongs to the phosphoglycerate kinase family.</text>
</comment>
<name>PGK_SULTO</name>
<evidence type="ECO:0000255" key="1">
    <source>
        <dbReference type="HAMAP-Rule" id="MF_00145"/>
    </source>
</evidence>
<gene>
    <name evidence="1" type="primary">pgk</name>
    <name type="ordered locus">STK_13570</name>
</gene>
<organism>
    <name type="scientific">Sulfurisphaera tokodaii (strain DSM 16993 / JCM 10545 / NBRC 100140 / 7)</name>
    <name type="common">Sulfolobus tokodaii</name>
    <dbReference type="NCBI Taxonomy" id="273063"/>
    <lineage>
        <taxon>Archaea</taxon>
        <taxon>Thermoproteota</taxon>
        <taxon>Thermoprotei</taxon>
        <taxon>Sulfolobales</taxon>
        <taxon>Sulfolobaceae</taxon>
        <taxon>Sulfurisphaera</taxon>
    </lineage>
</organism>
<reference key="1">
    <citation type="journal article" date="2001" name="DNA Res.">
        <title>Complete genome sequence of an aerobic thermoacidophilic Crenarchaeon, Sulfolobus tokodaii strain7.</title>
        <authorList>
            <person name="Kawarabayasi Y."/>
            <person name="Hino Y."/>
            <person name="Horikawa H."/>
            <person name="Jin-no K."/>
            <person name="Takahashi M."/>
            <person name="Sekine M."/>
            <person name="Baba S."/>
            <person name="Ankai A."/>
            <person name="Kosugi H."/>
            <person name="Hosoyama A."/>
            <person name="Fukui S."/>
            <person name="Nagai Y."/>
            <person name="Nishijima K."/>
            <person name="Otsuka R."/>
            <person name="Nakazawa H."/>
            <person name="Takamiya M."/>
            <person name="Kato Y."/>
            <person name="Yoshizawa T."/>
            <person name="Tanaka T."/>
            <person name="Kudoh Y."/>
            <person name="Yamazaki J."/>
            <person name="Kushida N."/>
            <person name="Oguchi A."/>
            <person name="Aoki K."/>
            <person name="Masuda S."/>
            <person name="Yanagii M."/>
            <person name="Nishimura M."/>
            <person name="Yamagishi A."/>
            <person name="Oshima T."/>
            <person name="Kikuchi H."/>
        </authorList>
    </citation>
    <scope>NUCLEOTIDE SEQUENCE [LARGE SCALE GENOMIC DNA]</scope>
    <source>
        <strain>DSM 16993 / JCM 10545 / NBRC 100140 / 7</strain>
    </source>
</reference>
<accession>Q971K1</accession>